<sequence length="939" mass="103168">MALSAALRLPLPRLLWGPTGSLLAAAAAASRRRAAVVAVPAVRFLSSSSSSSDGSRSVQPLRAGRDERAAAGEGGAAVKERVVPVELHKEATEAYMAYAMSVLLGRALPDVRDGLKPVHRRILYAMHEMGLASRRPFRKCARVVGEVLGKFHPHGDSAVYETLVRMAQDFSMRYPLVQGHGNFGSIDADPPAAMRYTECRLDVGCFFFLDIDAIFIIGQVDFVPNFDNSQKEPSLLPARVPSLLLNGSSGIAVGMATNIPPHNLGELVDVLSVMIENPEATLQELLECMPGPDFPTGGTIVGNQGILEAYKTGRGRVVMRGKTDIETIDVKSKRSAIIIKEVPYQTNKSTLVERIAELVEEKVLEGISDIRDESDRSGMRVVIELKRGADPAIVLNNLYRHTALQSSFSCNMVAILDGQPKLMGLKEILQAFIDFRCSVIERRARFKLSQALERKHIVEGIVIGLDNLDSVIQIIRGTSNHAMARESLIKEFGLSDKQAEALLDITLRKLTSLERKKFVDEAKSLSEEISKLNELLSNKKLIFQLILQEATDLKNKFATPRRSFIEDSASTEVDDLDIIPNEEMLLILSEKGYVKRMKPNTFNLQNRGTIGKSVGKMRMNDNTSDFIVCQTHDHVLYFSDKGIVYSARAYKIPECTRAATGTPLVQLLSLSDGERITSIVPVNEFGEDQYLVMLTVNGYIKKVPLNAFSAIRTSGIISIQLAPGDELKWVRRCGDDDLVALASQNGMVIVNTCNKLRALGRKTRGVLAMKLKEGDKMASMDIIPATSHNMPETYSRVRDLSPPWLLFIADNGIGKRVPLNAFRQGNFNRVGLQGYKLPPDCSLAAVFVVGFSLTDDGESDEQVVLVSQSGTVNRIKVKDISIRSRSARGVILMRLEHAGKIQSASLISAAEEEEEQDPESASLISEAEEPEKQDPEVSA</sequence>
<dbReference type="EC" id="5.6.2.2" evidence="4"/>
<dbReference type="EMBL" id="AC135594">
    <property type="protein sequence ID" value="AAR89868.1"/>
    <property type="status" value="ALT_SEQ"/>
    <property type="molecule type" value="Genomic_DNA"/>
</dbReference>
<dbReference type="EMBL" id="AC137507">
    <property type="protein sequence ID" value="AAP73860.1"/>
    <property type="status" value="ALT_SEQ"/>
    <property type="molecule type" value="Genomic_DNA"/>
</dbReference>
<dbReference type="EMBL" id="AP014959">
    <property type="status" value="NOT_ANNOTATED_CDS"/>
    <property type="molecule type" value="Genomic_DNA"/>
</dbReference>
<dbReference type="EMBL" id="AK059281">
    <property type="status" value="NOT_ANNOTATED_CDS"/>
    <property type="molecule type" value="mRNA"/>
</dbReference>
<dbReference type="SMR" id="Q7XZF7"/>
<dbReference type="FunCoup" id="Q7XZF7">
    <property type="interactions" value="266"/>
</dbReference>
<dbReference type="STRING" id="39947.Q7XZF7"/>
<dbReference type="PaxDb" id="39947-Q7XZF7"/>
<dbReference type="eggNOG" id="KOG0355">
    <property type="taxonomic scope" value="Eukaryota"/>
</dbReference>
<dbReference type="InParanoid" id="Q7XZF7"/>
<dbReference type="Proteomes" id="UP000000763">
    <property type="component" value="Chromosome 3"/>
</dbReference>
<dbReference type="Proteomes" id="UP000059680">
    <property type="component" value="Chromosome 3"/>
</dbReference>
<dbReference type="GO" id="GO:0009507">
    <property type="term" value="C:chloroplast"/>
    <property type="evidence" value="ECO:0007669"/>
    <property type="project" value="UniProtKB-SubCell"/>
</dbReference>
<dbReference type="GO" id="GO:0005694">
    <property type="term" value="C:chromosome"/>
    <property type="evidence" value="ECO:0007669"/>
    <property type="project" value="InterPro"/>
</dbReference>
<dbReference type="GO" id="GO:0005737">
    <property type="term" value="C:cytoplasm"/>
    <property type="evidence" value="ECO:0000318"/>
    <property type="project" value="GO_Central"/>
</dbReference>
<dbReference type="GO" id="GO:0009330">
    <property type="term" value="C:DNA topoisomerase type II (double strand cut, ATP-hydrolyzing) complex"/>
    <property type="evidence" value="ECO:0000318"/>
    <property type="project" value="GO_Central"/>
</dbReference>
<dbReference type="GO" id="GO:0005739">
    <property type="term" value="C:mitochondrion"/>
    <property type="evidence" value="ECO:0007669"/>
    <property type="project" value="UniProtKB-SubCell"/>
</dbReference>
<dbReference type="GO" id="GO:0005634">
    <property type="term" value="C:nucleus"/>
    <property type="evidence" value="ECO:0007669"/>
    <property type="project" value="UniProtKB-SubCell"/>
</dbReference>
<dbReference type="GO" id="GO:0005524">
    <property type="term" value="F:ATP binding"/>
    <property type="evidence" value="ECO:0000318"/>
    <property type="project" value="GO_Central"/>
</dbReference>
<dbReference type="GO" id="GO:0003677">
    <property type="term" value="F:DNA binding"/>
    <property type="evidence" value="ECO:0000318"/>
    <property type="project" value="GO_Central"/>
</dbReference>
<dbReference type="GO" id="GO:0003918">
    <property type="term" value="F:DNA topoisomerase type II (double strand cut, ATP-hydrolyzing) activity"/>
    <property type="evidence" value="ECO:0007669"/>
    <property type="project" value="UniProtKB-EC"/>
</dbReference>
<dbReference type="GO" id="GO:0006265">
    <property type="term" value="P:DNA topological change"/>
    <property type="evidence" value="ECO:0000318"/>
    <property type="project" value="GO_Central"/>
</dbReference>
<dbReference type="CDD" id="cd00187">
    <property type="entry name" value="TOP4c"/>
    <property type="match status" value="1"/>
</dbReference>
<dbReference type="FunFam" id="1.10.268.10:FF:000001">
    <property type="entry name" value="DNA gyrase subunit A"/>
    <property type="match status" value="1"/>
</dbReference>
<dbReference type="FunFam" id="2.120.10.90:FF:000007">
    <property type="entry name" value="DNA gyrase subunit A"/>
    <property type="match status" value="1"/>
</dbReference>
<dbReference type="FunFam" id="3.30.1360.40:FF:000002">
    <property type="entry name" value="DNA gyrase subunit A"/>
    <property type="match status" value="1"/>
</dbReference>
<dbReference type="Gene3D" id="3.30.1360.40">
    <property type="match status" value="1"/>
</dbReference>
<dbReference type="Gene3D" id="2.120.10.90">
    <property type="entry name" value="DNA gyrase/topoisomerase IV, subunit A, C-terminal"/>
    <property type="match status" value="1"/>
</dbReference>
<dbReference type="Gene3D" id="3.90.199.10">
    <property type="entry name" value="Topoisomerase II, domain 5"/>
    <property type="match status" value="1"/>
</dbReference>
<dbReference type="Gene3D" id="1.10.268.10">
    <property type="entry name" value="Topoisomerase, domain 3"/>
    <property type="match status" value="1"/>
</dbReference>
<dbReference type="HAMAP" id="MF_01897">
    <property type="entry name" value="GyrA"/>
    <property type="match status" value="1"/>
</dbReference>
<dbReference type="InterPro" id="IPR005743">
    <property type="entry name" value="GyrA"/>
</dbReference>
<dbReference type="InterPro" id="IPR006691">
    <property type="entry name" value="GyrA/parC_rep"/>
</dbReference>
<dbReference type="InterPro" id="IPR035516">
    <property type="entry name" value="Gyrase/topoIV_suA_C"/>
</dbReference>
<dbReference type="InterPro" id="IPR013760">
    <property type="entry name" value="Topo_IIA-like_dom_sf"/>
</dbReference>
<dbReference type="InterPro" id="IPR013758">
    <property type="entry name" value="Topo_IIA_A/C_ab"/>
</dbReference>
<dbReference type="InterPro" id="IPR013757">
    <property type="entry name" value="Topo_IIA_A_a_sf"/>
</dbReference>
<dbReference type="InterPro" id="IPR002205">
    <property type="entry name" value="Topo_IIA_dom_A"/>
</dbReference>
<dbReference type="InterPro" id="IPR050220">
    <property type="entry name" value="Type_II_DNA_Topoisomerases"/>
</dbReference>
<dbReference type="NCBIfam" id="TIGR01063">
    <property type="entry name" value="gyrA"/>
    <property type="match status" value="1"/>
</dbReference>
<dbReference type="NCBIfam" id="NF004043">
    <property type="entry name" value="PRK05560.1"/>
    <property type="match status" value="1"/>
</dbReference>
<dbReference type="NCBIfam" id="NF004044">
    <property type="entry name" value="PRK05561.1"/>
    <property type="match status" value="1"/>
</dbReference>
<dbReference type="PANTHER" id="PTHR43493:SF5">
    <property type="entry name" value="DNA GYRASE SUBUNIT A, CHLOROPLASTIC_MITOCHONDRIAL"/>
    <property type="match status" value="1"/>
</dbReference>
<dbReference type="PANTHER" id="PTHR43493">
    <property type="entry name" value="DNA GYRASE/TOPOISOMERASE SUBUNIT A"/>
    <property type="match status" value="1"/>
</dbReference>
<dbReference type="Pfam" id="PF03989">
    <property type="entry name" value="DNA_gyraseA_C"/>
    <property type="match status" value="6"/>
</dbReference>
<dbReference type="Pfam" id="PF00521">
    <property type="entry name" value="DNA_topoisoIV"/>
    <property type="match status" value="1"/>
</dbReference>
<dbReference type="SMART" id="SM00434">
    <property type="entry name" value="TOP4c"/>
    <property type="match status" value="1"/>
</dbReference>
<dbReference type="SUPFAM" id="SSF101904">
    <property type="entry name" value="GyrA/ParC C-terminal domain-like"/>
    <property type="match status" value="1"/>
</dbReference>
<dbReference type="SUPFAM" id="SSF56719">
    <property type="entry name" value="Type II DNA topoisomerase"/>
    <property type="match status" value="1"/>
</dbReference>
<dbReference type="PROSITE" id="PS52040">
    <property type="entry name" value="TOPO_IIA"/>
    <property type="match status" value="1"/>
</dbReference>
<comment type="function">
    <text evidence="1">A type II topoisomerase that negatively supercoils closed circular double-stranded DNA in an ATP-dependent manner.</text>
</comment>
<comment type="catalytic activity">
    <reaction evidence="4">
        <text>ATP-dependent breakage, passage and rejoining of double-stranded DNA.</text>
        <dbReference type="EC" id="5.6.2.2"/>
    </reaction>
</comment>
<comment type="subunit">
    <text evidence="2">Made up of two chains. The A chain is responsible for DNA breakage and rejoining; the B chain catalyzes ATP hydrolysis.</text>
</comment>
<comment type="subcellular location">
    <subcellularLocation>
        <location evidence="2">Plastid</location>
        <location evidence="2">Chloroplast</location>
    </subcellularLocation>
    <subcellularLocation>
        <location evidence="2">Mitochondrion</location>
    </subcellularLocation>
    <subcellularLocation>
        <location evidence="2">Nucleus</location>
    </subcellularLocation>
</comment>
<comment type="similarity">
    <text evidence="1">Belongs to the type II topoisomerase GyrA/ParC subunit family.</text>
</comment>
<comment type="sequence caution" evidence="6">
    <conflict type="erroneous gene model prediction">
        <sequence resource="EMBL-CDS" id="AAP73860"/>
    </conflict>
</comment>
<comment type="sequence caution" evidence="6">
    <conflict type="erroneous gene model prediction">
        <sequence resource="EMBL-CDS" id="AAR89868"/>
    </conflict>
</comment>
<reference key="1">
    <citation type="journal article" date="2005" name="Genome Res.">
        <title>Sequence, annotation, and analysis of synteny between rice chromosome 3 and diverged grass species.</title>
        <authorList>
            <consortium name="The rice chromosome 3 sequencing consortium"/>
            <person name="Buell C.R."/>
            <person name="Yuan Q."/>
            <person name="Ouyang S."/>
            <person name="Liu J."/>
            <person name="Zhu W."/>
            <person name="Wang A."/>
            <person name="Maiti R."/>
            <person name="Haas B."/>
            <person name="Wortman J."/>
            <person name="Pertea M."/>
            <person name="Jones K.M."/>
            <person name="Kim M."/>
            <person name="Overton L."/>
            <person name="Tsitrin T."/>
            <person name="Fadrosh D."/>
            <person name="Bera J."/>
            <person name="Weaver B."/>
            <person name="Jin S."/>
            <person name="Johri S."/>
            <person name="Reardon M."/>
            <person name="Webb K."/>
            <person name="Hill J."/>
            <person name="Moffat K."/>
            <person name="Tallon L."/>
            <person name="Van Aken S."/>
            <person name="Lewis M."/>
            <person name="Utterback T."/>
            <person name="Feldblyum T."/>
            <person name="Zismann V."/>
            <person name="Iobst S."/>
            <person name="Hsiao J."/>
            <person name="de Vazeille A.R."/>
            <person name="Salzberg S.L."/>
            <person name="White O."/>
            <person name="Fraser C.M."/>
            <person name="Yu Y."/>
            <person name="Kim H."/>
            <person name="Rambo T."/>
            <person name="Currie J."/>
            <person name="Collura K."/>
            <person name="Kernodle-Thompson S."/>
            <person name="Wei F."/>
            <person name="Kudrna K."/>
            <person name="Ammiraju J.S.S."/>
            <person name="Luo M."/>
            <person name="Goicoechea J.L."/>
            <person name="Wing R.A."/>
            <person name="Henry D."/>
            <person name="Oates R."/>
            <person name="Palmer M."/>
            <person name="Pries G."/>
            <person name="Saski C."/>
            <person name="Simmons J."/>
            <person name="Soderlund C."/>
            <person name="Nelson W."/>
            <person name="de la Bastide M."/>
            <person name="Spiegel L."/>
            <person name="Nascimento L."/>
            <person name="Huang E."/>
            <person name="Preston R."/>
            <person name="Zutavern T."/>
            <person name="Palmer L."/>
            <person name="O'Shaughnessy A."/>
            <person name="Dike S."/>
            <person name="McCombie W.R."/>
            <person name="Minx P."/>
            <person name="Cordum H."/>
            <person name="Wilson R."/>
            <person name="Jin W."/>
            <person name="Lee H.R."/>
            <person name="Jiang J."/>
            <person name="Jackson S."/>
        </authorList>
    </citation>
    <scope>NUCLEOTIDE SEQUENCE [LARGE SCALE GENOMIC DNA]</scope>
    <source>
        <strain>cv. Nipponbare</strain>
    </source>
</reference>
<reference key="2">
    <citation type="journal article" date="2005" name="Nature">
        <title>The map-based sequence of the rice genome.</title>
        <authorList>
            <consortium name="International rice genome sequencing project (IRGSP)"/>
        </authorList>
    </citation>
    <scope>NUCLEOTIDE SEQUENCE [LARGE SCALE GENOMIC DNA]</scope>
    <source>
        <strain>cv. Nipponbare</strain>
    </source>
</reference>
<reference key="3">
    <citation type="journal article" date="2013" name="Rice">
        <title>Improvement of the Oryza sativa Nipponbare reference genome using next generation sequence and optical map data.</title>
        <authorList>
            <person name="Kawahara Y."/>
            <person name="de la Bastide M."/>
            <person name="Hamilton J.P."/>
            <person name="Kanamori H."/>
            <person name="McCombie W.R."/>
            <person name="Ouyang S."/>
            <person name="Schwartz D.C."/>
            <person name="Tanaka T."/>
            <person name="Wu J."/>
            <person name="Zhou S."/>
            <person name="Childs K.L."/>
            <person name="Davidson R.M."/>
            <person name="Lin H."/>
            <person name="Quesada-Ocampo L."/>
            <person name="Vaillancourt B."/>
            <person name="Sakai H."/>
            <person name="Lee S.S."/>
            <person name="Kim J."/>
            <person name="Numa H."/>
            <person name="Itoh T."/>
            <person name="Buell C.R."/>
            <person name="Matsumoto T."/>
        </authorList>
    </citation>
    <scope>GENOME REANNOTATION</scope>
    <source>
        <strain>cv. Nipponbare</strain>
    </source>
</reference>
<reference key="4">
    <citation type="journal article" date="2003" name="Science">
        <title>Collection, mapping, and annotation of over 28,000 cDNA clones from japonica rice.</title>
        <authorList>
            <consortium name="The rice full-length cDNA consortium"/>
        </authorList>
    </citation>
    <scope>NUCLEOTIDE SEQUENCE [LARGE SCALE MRNA] OF 502-939</scope>
    <source>
        <strain>cv. Nipponbare</strain>
    </source>
</reference>
<gene>
    <name type="primary">GYRA</name>
    <name type="ordered locus">Os03g0812000</name>
    <name type="ordered locus">LOC_Os03g59750</name>
    <name type="ORF">OSJNBa0024F18.37</name>
    <name type="ORF">OSJNBb0033J23.17</name>
</gene>
<name>GYRA_ORYSJ</name>
<evidence type="ECO:0000250" key="1">
    <source>
        <dbReference type="UniProtKB" id="P0AES4"/>
    </source>
</evidence>
<evidence type="ECO:0000250" key="2">
    <source>
        <dbReference type="UniProtKB" id="Q9CAF6"/>
    </source>
</evidence>
<evidence type="ECO:0000255" key="3"/>
<evidence type="ECO:0000255" key="4">
    <source>
        <dbReference type="PROSITE-ProRule" id="PRU01384"/>
    </source>
</evidence>
<evidence type="ECO:0000256" key="5">
    <source>
        <dbReference type="SAM" id="MobiDB-lite"/>
    </source>
</evidence>
<evidence type="ECO:0000305" key="6"/>
<protein>
    <recommendedName>
        <fullName>Probable DNA gyrase subunit A, chloroplastic/mitochondrial</fullName>
        <ecNumber evidence="4">5.6.2.2</ecNumber>
    </recommendedName>
</protein>
<proteinExistence type="evidence at transcript level"/>
<organism>
    <name type="scientific">Oryza sativa subsp. japonica</name>
    <name type="common">Rice</name>
    <dbReference type="NCBI Taxonomy" id="39947"/>
    <lineage>
        <taxon>Eukaryota</taxon>
        <taxon>Viridiplantae</taxon>
        <taxon>Streptophyta</taxon>
        <taxon>Embryophyta</taxon>
        <taxon>Tracheophyta</taxon>
        <taxon>Spermatophyta</taxon>
        <taxon>Magnoliopsida</taxon>
        <taxon>Liliopsida</taxon>
        <taxon>Poales</taxon>
        <taxon>Poaceae</taxon>
        <taxon>BOP clade</taxon>
        <taxon>Oryzoideae</taxon>
        <taxon>Oryzeae</taxon>
        <taxon>Oryzinae</taxon>
        <taxon>Oryza</taxon>
        <taxon>Oryza sativa</taxon>
    </lineage>
</organism>
<keyword id="KW-0067">ATP-binding</keyword>
<keyword id="KW-0150">Chloroplast</keyword>
<keyword id="KW-0238">DNA-binding</keyword>
<keyword id="KW-0413">Isomerase</keyword>
<keyword id="KW-0496">Mitochondrion</keyword>
<keyword id="KW-0547">Nucleotide-binding</keyword>
<keyword id="KW-0539">Nucleus</keyword>
<keyword id="KW-0934">Plastid</keyword>
<keyword id="KW-1185">Reference proteome</keyword>
<keyword id="KW-0799">Topoisomerase</keyword>
<keyword id="KW-0809">Transit peptide</keyword>
<feature type="transit peptide" description="Chloroplast and mitochondrion" evidence="3">
    <location>
        <begin position="1"/>
        <end status="unknown"/>
    </location>
</feature>
<feature type="chain" id="PRO_0000247947" description="Probable DNA gyrase subunit A, chloroplastic/mitochondrial">
    <location>
        <begin status="unknown"/>
        <end position="939"/>
    </location>
</feature>
<feature type="domain" description="Topo IIA-type catalytic" evidence="4">
    <location>
        <begin position="108"/>
        <end position="578"/>
    </location>
</feature>
<feature type="region of interest" description="Disordered" evidence="5">
    <location>
        <begin position="46"/>
        <end position="73"/>
    </location>
</feature>
<feature type="region of interest" description="Disordered" evidence="5">
    <location>
        <begin position="906"/>
        <end position="939"/>
    </location>
</feature>
<feature type="short sequence motif" description="GyrA-box" evidence="1">
    <location>
        <begin position="605"/>
        <end position="611"/>
    </location>
</feature>
<feature type="compositionally biased region" description="Low complexity" evidence="5">
    <location>
        <begin position="46"/>
        <end position="57"/>
    </location>
</feature>
<feature type="compositionally biased region" description="Basic and acidic residues" evidence="5">
    <location>
        <begin position="930"/>
        <end position="939"/>
    </location>
</feature>
<feature type="active site" description="O-(5'-phospho-DNA)-tyrosine intermediate" evidence="4">
    <location>
        <position position="196"/>
    </location>
</feature>
<accession>Q7XZF7</accession>
<accession>Q75HI0</accession>